<evidence type="ECO:0000255" key="1">
    <source>
        <dbReference type="HAMAP-Rule" id="MF_01849"/>
    </source>
</evidence>
<evidence type="ECO:0000255" key="2">
    <source>
        <dbReference type="PROSITE-ProRule" id="PRU01266"/>
    </source>
</evidence>
<evidence type="ECO:0000256" key="3">
    <source>
        <dbReference type="SAM" id="MobiDB-lite"/>
    </source>
</evidence>
<comment type="function">
    <text evidence="1">Specifically methylates position 2 of adenine 2503 in 23S rRNA and position 2 of adenine 37 in tRNAs. m2A2503 modification seems to play a crucial role in the proofreading step occurring at the peptidyl transferase center and thus would serve to optimize ribosomal fidelity.</text>
</comment>
<comment type="catalytic activity">
    <reaction evidence="1">
        <text>adenosine(2503) in 23S rRNA + 2 reduced [2Fe-2S]-[ferredoxin] + 2 S-adenosyl-L-methionine = 2-methyladenosine(2503) in 23S rRNA + 5'-deoxyadenosine + L-methionine + 2 oxidized [2Fe-2S]-[ferredoxin] + S-adenosyl-L-homocysteine</text>
        <dbReference type="Rhea" id="RHEA:42916"/>
        <dbReference type="Rhea" id="RHEA-COMP:10000"/>
        <dbReference type="Rhea" id="RHEA-COMP:10001"/>
        <dbReference type="Rhea" id="RHEA-COMP:10152"/>
        <dbReference type="Rhea" id="RHEA-COMP:10282"/>
        <dbReference type="ChEBI" id="CHEBI:17319"/>
        <dbReference type="ChEBI" id="CHEBI:33737"/>
        <dbReference type="ChEBI" id="CHEBI:33738"/>
        <dbReference type="ChEBI" id="CHEBI:57844"/>
        <dbReference type="ChEBI" id="CHEBI:57856"/>
        <dbReference type="ChEBI" id="CHEBI:59789"/>
        <dbReference type="ChEBI" id="CHEBI:74411"/>
        <dbReference type="ChEBI" id="CHEBI:74497"/>
        <dbReference type="EC" id="2.1.1.192"/>
    </reaction>
</comment>
<comment type="catalytic activity">
    <reaction evidence="1">
        <text>adenosine(37) in tRNA + 2 reduced [2Fe-2S]-[ferredoxin] + 2 S-adenosyl-L-methionine = 2-methyladenosine(37) in tRNA + 5'-deoxyadenosine + L-methionine + 2 oxidized [2Fe-2S]-[ferredoxin] + S-adenosyl-L-homocysteine</text>
        <dbReference type="Rhea" id="RHEA:43332"/>
        <dbReference type="Rhea" id="RHEA-COMP:10000"/>
        <dbReference type="Rhea" id="RHEA-COMP:10001"/>
        <dbReference type="Rhea" id="RHEA-COMP:10162"/>
        <dbReference type="Rhea" id="RHEA-COMP:10485"/>
        <dbReference type="ChEBI" id="CHEBI:17319"/>
        <dbReference type="ChEBI" id="CHEBI:33737"/>
        <dbReference type="ChEBI" id="CHEBI:33738"/>
        <dbReference type="ChEBI" id="CHEBI:57844"/>
        <dbReference type="ChEBI" id="CHEBI:57856"/>
        <dbReference type="ChEBI" id="CHEBI:59789"/>
        <dbReference type="ChEBI" id="CHEBI:74411"/>
        <dbReference type="ChEBI" id="CHEBI:74497"/>
        <dbReference type="EC" id="2.1.1.192"/>
    </reaction>
</comment>
<comment type="cofactor">
    <cofactor evidence="1">
        <name>[4Fe-4S] cluster</name>
        <dbReference type="ChEBI" id="CHEBI:49883"/>
    </cofactor>
    <text evidence="1">Binds 1 [4Fe-4S] cluster. The cluster is coordinated with 3 cysteines and an exchangeable S-adenosyl-L-methionine.</text>
</comment>
<comment type="subcellular location">
    <subcellularLocation>
        <location evidence="1">Cytoplasm</location>
    </subcellularLocation>
</comment>
<comment type="miscellaneous">
    <text evidence="1">Reaction proceeds by a ping-pong mechanism involving intermediate methylation of a conserved cysteine residue.</text>
</comment>
<comment type="similarity">
    <text evidence="1">Belongs to the radical SAM superfamily. RlmN family.</text>
</comment>
<dbReference type="EC" id="2.1.1.192" evidence="1"/>
<dbReference type="EMBL" id="CP000251">
    <property type="protein sequence ID" value="ABC81404.1"/>
    <property type="molecule type" value="Genomic_DNA"/>
</dbReference>
<dbReference type="RefSeq" id="WP_011420687.1">
    <property type="nucleotide sequence ID" value="NC_007760.1"/>
</dbReference>
<dbReference type="SMR" id="Q2IIC5"/>
<dbReference type="STRING" id="290397.Adeh_1631"/>
<dbReference type="KEGG" id="ade:Adeh_1631"/>
<dbReference type="eggNOG" id="COG0820">
    <property type="taxonomic scope" value="Bacteria"/>
</dbReference>
<dbReference type="HOGENOM" id="CLU_029101_2_0_7"/>
<dbReference type="OrthoDB" id="9793973at2"/>
<dbReference type="Proteomes" id="UP000001935">
    <property type="component" value="Chromosome"/>
</dbReference>
<dbReference type="GO" id="GO:0005737">
    <property type="term" value="C:cytoplasm"/>
    <property type="evidence" value="ECO:0007669"/>
    <property type="project" value="UniProtKB-SubCell"/>
</dbReference>
<dbReference type="GO" id="GO:0051539">
    <property type="term" value="F:4 iron, 4 sulfur cluster binding"/>
    <property type="evidence" value="ECO:0007669"/>
    <property type="project" value="UniProtKB-UniRule"/>
</dbReference>
<dbReference type="GO" id="GO:0046872">
    <property type="term" value="F:metal ion binding"/>
    <property type="evidence" value="ECO:0007669"/>
    <property type="project" value="UniProtKB-KW"/>
</dbReference>
<dbReference type="GO" id="GO:0070040">
    <property type="term" value="F:rRNA (adenine(2503)-C2-)-methyltransferase activity"/>
    <property type="evidence" value="ECO:0007669"/>
    <property type="project" value="UniProtKB-UniRule"/>
</dbReference>
<dbReference type="GO" id="GO:0019843">
    <property type="term" value="F:rRNA binding"/>
    <property type="evidence" value="ECO:0007669"/>
    <property type="project" value="UniProtKB-UniRule"/>
</dbReference>
<dbReference type="GO" id="GO:0002935">
    <property type="term" value="F:tRNA (adenine(37)-C2)-methyltransferase activity"/>
    <property type="evidence" value="ECO:0007669"/>
    <property type="project" value="UniProtKB-UniRule"/>
</dbReference>
<dbReference type="GO" id="GO:0000049">
    <property type="term" value="F:tRNA binding"/>
    <property type="evidence" value="ECO:0007669"/>
    <property type="project" value="UniProtKB-UniRule"/>
</dbReference>
<dbReference type="GO" id="GO:0070475">
    <property type="term" value="P:rRNA base methylation"/>
    <property type="evidence" value="ECO:0007669"/>
    <property type="project" value="UniProtKB-UniRule"/>
</dbReference>
<dbReference type="GO" id="GO:0030488">
    <property type="term" value="P:tRNA methylation"/>
    <property type="evidence" value="ECO:0007669"/>
    <property type="project" value="UniProtKB-UniRule"/>
</dbReference>
<dbReference type="CDD" id="cd01335">
    <property type="entry name" value="Radical_SAM"/>
    <property type="match status" value="1"/>
</dbReference>
<dbReference type="FunFam" id="3.20.20.70:FF:000014">
    <property type="entry name" value="Probable dual-specificity RNA methyltransferase RlmN"/>
    <property type="match status" value="1"/>
</dbReference>
<dbReference type="Gene3D" id="1.10.150.530">
    <property type="match status" value="1"/>
</dbReference>
<dbReference type="Gene3D" id="3.20.20.70">
    <property type="entry name" value="Aldolase class I"/>
    <property type="match status" value="1"/>
</dbReference>
<dbReference type="HAMAP" id="MF_01849">
    <property type="entry name" value="RNA_methyltr_RlmN"/>
    <property type="match status" value="1"/>
</dbReference>
<dbReference type="InterPro" id="IPR013785">
    <property type="entry name" value="Aldolase_TIM"/>
</dbReference>
<dbReference type="InterPro" id="IPR040072">
    <property type="entry name" value="Methyltransferase_A"/>
</dbReference>
<dbReference type="InterPro" id="IPR048641">
    <property type="entry name" value="RlmN_N"/>
</dbReference>
<dbReference type="InterPro" id="IPR027492">
    <property type="entry name" value="RNA_MTrfase_RlmN"/>
</dbReference>
<dbReference type="InterPro" id="IPR004383">
    <property type="entry name" value="rRNA_lsu_MTrfase_RlmN/Cfr"/>
</dbReference>
<dbReference type="InterPro" id="IPR007197">
    <property type="entry name" value="rSAM"/>
</dbReference>
<dbReference type="NCBIfam" id="TIGR00048">
    <property type="entry name" value="rRNA_mod_RlmN"/>
    <property type="match status" value="1"/>
</dbReference>
<dbReference type="PANTHER" id="PTHR30544">
    <property type="entry name" value="23S RRNA METHYLTRANSFERASE"/>
    <property type="match status" value="1"/>
</dbReference>
<dbReference type="PANTHER" id="PTHR30544:SF5">
    <property type="entry name" value="RADICAL SAM CORE DOMAIN-CONTAINING PROTEIN"/>
    <property type="match status" value="1"/>
</dbReference>
<dbReference type="Pfam" id="PF04055">
    <property type="entry name" value="Radical_SAM"/>
    <property type="match status" value="1"/>
</dbReference>
<dbReference type="Pfam" id="PF21016">
    <property type="entry name" value="RlmN_N"/>
    <property type="match status" value="1"/>
</dbReference>
<dbReference type="PIRSF" id="PIRSF006004">
    <property type="entry name" value="CHP00048"/>
    <property type="match status" value="1"/>
</dbReference>
<dbReference type="SFLD" id="SFLDF00275">
    <property type="entry name" value="adenosine_C2_methyltransferase"/>
    <property type="match status" value="1"/>
</dbReference>
<dbReference type="SFLD" id="SFLDG01062">
    <property type="entry name" value="methyltransferase_(Class_A)"/>
    <property type="match status" value="1"/>
</dbReference>
<dbReference type="SUPFAM" id="SSF102114">
    <property type="entry name" value="Radical SAM enzymes"/>
    <property type="match status" value="1"/>
</dbReference>
<dbReference type="PROSITE" id="PS51918">
    <property type="entry name" value="RADICAL_SAM"/>
    <property type="match status" value="1"/>
</dbReference>
<accession>Q2IIC5</accession>
<feature type="chain" id="PRO_0000350014" description="Dual-specificity RNA methyltransferase RlmN">
    <location>
        <begin position="1"/>
        <end position="372"/>
    </location>
</feature>
<feature type="domain" description="Radical SAM core" evidence="2">
    <location>
        <begin position="103"/>
        <end position="340"/>
    </location>
</feature>
<feature type="region of interest" description="Disordered" evidence="3">
    <location>
        <begin position="350"/>
        <end position="372"/>
    </location>
</feature>
<feature type="compositionally biased region" description="Low complexity" evidence="3">
    <location>
        <begin position="362"/>
        <end position="372"/>
    </location>
</feature>
<feature type="active site" description="Proton acceptor" evidence="1">
    <location>
        <position position="97"/>
    </location>
</feature>
<feature type="active site" description="S-methylcysteine intermediate" evidence="1">
    <location>
        <position position="345"/>
    </location>
</feature>
<feature type="binding site" evidence="1">
    <location>
        <position position="117"/>
    </location>
    <ligand>
        <name>[4Fe-4S] cluster</name>
        <dbReference type="ChEBI" id="CHEBI:49883"/>
        <note>4Fe-4S-S-AdoMet</note>
    </ligand>
</feature>
<feature type="binding site" evidence="1">
    <location>
        <position position="121"/>
    </location>
    <ligand>
        <name>[4Fe-4S] cluster</name>
        <dbReference type="ChEBI" id="CHEBI:49883"/>
        <note>4Fe-4S-S-AdoMet</note>
    </ligand>
</feature>
<feature type="binding site" evidence="1">
    <location>
        <position position="124"/>
    </location>
    <ligand>
        <name>[4Fe-4S] cluster</name>
        <dbReference type="ChEBI" id="CHEBI:49883"/>
        <note>4Fe-4S-S-AdoMet</note>
    </ligand>
</feature>
<feature type="binding site" evidence="1">
    <location>
        <begin position="172"/>
        <end position="173"/>
    </location>
    <ligand>
        <name>S-adenosyl-L-methionine</name>
        <dbReference type="ChEBI" id="CHEBI:59789"/>
    </ligand>
</feature>
<feature type="binding site" evidence="1">
    <location>
        <position position="204"/>
    </location>
    <ligand>
        <name>S-adenosyl-L-methionine</name>
        <dbReference type="ChEBI" id="CHEBI:59789"/>
    </ligand>
</feature>
<feature type="binding site" evidence="1">
    <location>
        <begin position="226"/>
        <end position="228"/>
    </location>
    <ligand>
        <name>S-adenosyl-L-methionine</name>
        <dbReference type="ChEBI" id="CHEBI:59789"/>
    </ligand>
</feature>
<feature type="binding site" evidence="1">
    <location>
        <position position="302"/>
    </location>
    <ligand>
        <name>S-adenosyl-L-methionine</name>
        <dbReference type="ChEBI" id="CHEBI:59789"/>
    </ligand>
</feature>
<feature type="disulfide bond" description="(transient)" evidence="1">
    <location>
        <begin position="110"/>
        <end position="345"/>
    </location>
</feature>
<organism>
    <name type="scientific">Anaeromyxobacter dehalogenans (strain 2CP-C)</name>
    <dbReference type="NCBI Taxonomy" id="290397"/>
    <lineage>
        <taxon>Bacteria</taxon>
        <taxon>Pseudomonadati</taxon>
        <taxon>Myxococcota</taxon>
        <taxon>Myxococcia</taxon>
        <taxon>Myxococcales</taxon>
        <taxon>Cystobacterineae</taxon>
        <taxon>Anaeromyxobacteraceae</taxon>
        <taxon>Anaeromyxobacter</taxon>
    </lineage>
</organism>
<sequence length="372" mass="40763">MDVLHDDTPDLRSLPQERLASLIAGLGEKPFRARQVYRWLHLRGAASLEEMTDVPRALRERLAEGTRLTTLERATEQRSADGTIKWTWRTRDGKLVESVYLPETDRKTLCVSTQVGCAVGCTFCMTGTMGLARNLEPGEIVDQVHRANRRLIELGEGEGPRPLTNLVFMGMGEPLANYRSLKVALDLLLSEDGPNFSHRHVTVSTSGLVPVMRRLGEETQVKLAVSLNATTDAQRDAIMPINRRYPLAELLRACREFPMKQGRRITFEYVMLGGVNDAPEDAERLARLLRGIPAKVNLIPYNENPGLGFAAPAPGAVERFRDLLVARNVTAVVRKNRGTDIAAACGQLAAEGGPGDPRRRAAAALTGTPAAG</sequence>
<proteinExistence type="inferred from homology"/>
<name>RLMN_ANADE</name>
<reference key="1">
    <citation type="submission" date="2006-01" db="EMBL/GenBank/DDBJ databases">
        <title>Complete sequence of Anaeromyxobacter dehalogenans 2CP-C.</title>
        <authorList>
            <person name="Copeland A."/>
            <person name="Lucas S."/>
            <person name="Lapidus A."/>
            <person name="Barry K."/>
            <person name="Detter J.C."/>
            <person name="Glavina T."/>
            <person name="Hammon N."/>
            <person name="Israni S."/>
            <person name="Pitluck S."/>
            <person name="Brettin T."/>
            <person name="Bruce D."/>
            <person name="Han C."/>
            <person name="Tapia R."/>
            <person name="Gilna P."/>
            <person name="Kiss H."/>
            <person name="Schmutz J."/>
            <person name="Larimer F."/>
            <person name="Land M."/>
            <person name="Kyrpides N."/>
            <person name="Anderson I."/>
            <person name="Sanford R.A."/>
            <person name="Ritalahti K.M."/>
            <person name="Thomas H.S."/>
            <person name="Kirby J.R."/>
            <person name="Zhulin I.B."/>
            <person name="Loeffler F.E."/>
            <person name="Richardson P."/>
        </authorList>
    </citation>
    <scope>NUCLEOTIDE SEQUENCE [LARGE SCALE GENOMIC DNA]</scope>
    <source>
        <strain>2CP-C</strain>
    </source>
</reference>
<keyword id="KW-0004">4Fe-4S</keyword>
<keyword id="KW-0963">Cytoplasm</keyword>
<keyword id="KW-1015">Disulfide bond</keyword>
<keyword id="KW-0408">Iron</keyword>
<keyword id="KW-0411">Iron-sulfur</keyword>
<keyword id="KW-0479">Metal-binding</keyword>
<keyword id="KW-0489">Methyltransferase</keyword>
<keyword id="KW-1185">Reference proteome</keyword>
<keyword id="KW-0698">rRNA processing</keyword>
<keyword id="KW-0949">S-adenosyl-L-methionine</keyword>
<keyword id="KW-0808">Transferase</keyword>
<keyword id="KW-0819">tRNA processing</keyword>
<protein>
    <recommendedName>
        <fullName evidence="1">Dual-specificity RNA methyltransferase RlmN</fullName>
        <ecNumber evidence="1">2.1.1.192</ecNumber>
    </recommendedName>
    <alternativeName>
        <fullName evidence="1">23S rRNA (adenine(2503)-C(2))-methyltransferase</fullName>
    </alternativeName>
    <alternativeName>
        <fullName evidence="1">23S rRNA m2A2503 methyltransferase</fullName>
    </alternativeName>
    <alternativeName>
        <fullName evidence="1">Ribosomal RNA large subunit methyltransferase N</fullName>
    </alternativeName>
    <alternativeName>
        <fullName evidence="1">tRNA (adenine(37)-C(2))-methyltransferase</fullName>
    </alternativeName>
    <alternativeName>
        <fullName evidence="1">tRNA m2A37 methyltransferase</fullName>
    </alternativeName>
</protein>
<gene>
    <name evidence="1" type="primary">rlmN</name>
    <name type="ordered locus">Adeh_1631</name>
</gene>